<gene>
    <name type="primary">mphE</name>
    <name type="ordered locus">Avin_15130</name>
</gene>
<comment type="catalytic activity">
    <reaction evidence="1">
        <text>(S)-4-hydroxy-2-oxopentanoate = acetaldehyde + pyruvate</text>
        <dbReference type="Rhea" id="RHEA:22624"/>
        <dbReference type="ChEBI" id="CHEBI:15343"/>
        <dbReference type="ChEBI" id="CHEBI:15361"/>
        <dbReference type="ChEBI" id="CHEBI:73143"/>
        <dbReference type="EC" id="4.1.3.39"/>
    </reaction>
</comment>
<comment type="similarity">
    <text evidence="1">Belongs to the 4-hydroxy-2-oxovalerate aldolase family.</text>
</comment>
<accession>C1DRJ0</accession>
<reference key="1">
    <citation type="journal article" date="2009" name="J. Bacteriol.">
        <title>Genome sequence of Azotobacter vinelandii, an obligate aerobe specialized to support diverse anaerobic metabolic processes.</title>
        <authorList>
            <person name="Setubal J.C."/>
            <person name="Dos Santos P."/>
            <person name="Goldman B.S."/>
            <person name="Ertesvaag H."/>
            <person name="Espin G."/>
            <person name="Rubio L.M."/>
            <person name="Valla S."/>
            <person name="Almeida N.F."/>
            <person name="Balasubramanian D."/>
            <person name="Cromes L."/>
            <person name="Curatti L."/>
            <person name="Du Z."/>
            <person name="Godsy E."/>
            <person name="Goodner B."/>
            <person name="Hellner-Burris K."/>
            <person name="Hernandez J.A."/>
            <person name="Houmiel K."/>
            <person name="Imperial J."/>
            <person name="Kennedy C."/>
            <person name="Larson T.J."/>
            <person name="Latreille P."/>
            <person name="Ligon L.S."/>
            <person name="Lu J."/>
            <person name="Maerk M."/>
            <person name="Miller N.M."/>
            <person name="Norton S."/>
            <person name="O'Carroll I.P."/>
            <person name="Paulsen I."/>
            <person name="Raulfs E.C."/>
            <person name="Roemer R."/>
            <person name="Rosser J."/>
            <person name="Segura D."/>
            <person name="Slater S."/>
            <person name="Stricklin S.L."/>
            <person name="Studholme D.J."/>
            <person name="Sun J."/>
            <person name="Viana C.J."/>
            <person name="Wallin E."/>
            <person name="Wang B."/>
            <person name="Wheeler C."/>
            <person name="Zhu H."/>
            <person name="Dean D.R."/>
            <person name="Dixon R."/>
            <person name="Wood D."/>
        </authorList>
    </citation>
    <scope>NUCLEOTIDE SEQUENCE [LARGE SCALE GENOMIC DNA]</scope>
    <source>
        <strain>DJ / ATCC BAA-1303</strain>
    </source>
</reference>
<keyword id="KW-0058">Aromatic hydrocarbons catabolism</keyword>
<keyword id="KW-0456">Lyase</keyword>
<keyword id="KW-0464">Manganese</keyword>
<keyword id="KW-0479">Metal-binding</keyword>
<proteinExistence type="inferred from homology"/>
<sequence>MTFNPGKKLYISDVTLRDGSHAIRHQYSIANVQAIARALDQAKVDSIEVAHGDGLQGSSFNYGFGAHTDLEWIEAVAEVVTHARIATLLLPGIGTVHHLKEAYEAGARIVRVATHCTEADVSRQHIAYARELGMDTVGFLMMSHMTTPQNLAVEAKKMESYGATCIYVVDSGGALSMQDVRERFRAVKDLLEPSTQTGIHAHHNLSLGVANSIVAVEEGCDRIDASLAGMGAGAGNAPLEVFVAAAERLGWNHGTDLYTLMDAADEIVRPLQDRPVRVDRETLALGYAGVYSSFLRHAEVAAEKYGLSTVDILVELGRRRMVGGQEDMIVDVALDLLER</sequence>
<organism>
    <name type="scientific">Azotobacter vinelandii (strain DJ / ATCC BAA-1303)</name>
    <dbReference type="NCBI Taxonomy" id="322710"/>
    <lineage>
        <taxon>Bacteria</taxon>
        <taxon>Pseudomonadati</taxon>
        <taxon>Pseudomonadota</taxon>
        <taxon>Gammaproteobacteria</taxon>
        <taxon>Pseudomonadales</taxon>
        <taxon>Pseudomonadaceae</taxon>
        <taxon>Azotobacter</taxon>
    </lineage>
</organism>
<name>HOA2_AZOVD</name>
<feature type="chain" id="PRO_0000387786" description="4-hydroxy-2-oxovalerate aldolase 2">
    <location>
        <begin position="1"/>
        <end position="339"/>
    </location>
</feature>
<feature type="domain" description="Pyruvate carboxyltransferase" evidence="1">
    <location>
        <begin position="9"/>
        <end position="261"/>
    </location>
</feature>
<feature type="active site" description="Proton acceptor" evidence="1">
    <location>
        <position position="21"/>
    </location>
</feature>
<feature type="binding site" evidence="1">
    <location>
        <begin position="17"/>
        <end position="18"/>
    </location>
    <ligand>
        <name>substrate</name>
    </ligand>
</feature>
<feature type="binding site" evidence="1">
    <location>
        <position position="18"/>
    </location>
    <ligand>
        <name>Mn(2+)</name>
        <dbReference type="ChEBI" id="CHEBI:29035"/>
    </ligand>
</feature>
<feature type="binding site" evidence="1">
    <location>
        <position position="171"/>
    </location>
    <ligand>
        <name>substrate</name>
    </ligand>
</feature>
<feature type="binding site" evidence="1">
    <location>
        <position position="200"/>
    </location>
    <ligand>
        <name>Mn(2+)</name>
        <dbReference type="ChEBI" id="CHEBI:29035"/>
    </ligand>
</feature>
<feature type="binding site" evidence="1">
    <location>
        <position position="200"/>
    </location>
    <ligand>
        <name>substrate</name>
    </ligand>
</feature>
<feature type="binding site" evidence="1">
    <location>
        <position position="202"/>
    </location>
    <ligand>
        <name>Mn(2+)</name>
        <dbReference type="ChEBI" id="CHEBI:29035"/>
    </ligand>
</feature>
<feature type="binding site" evidence="1">
    <location>
        <position position="291"/>
    </location>
    <ligand>
        <name>substrate</name>
    </ligand>
</feature>
<feature type="site" description="Transition state stabilizer" evidence="1">
    <location>
        <position position="17"/>
    </location>
</feature>
<dbReference type="EC" id="4.1.3.39" evidence="1"/>
<dbReference type="EMBL" id="CP001157">
    <property type="protein sequence ID" value="ACO77728.1"/>
    <property type="molecule type" value="Genomic_DNA"/>
</dbReference>
<dbReference type="RefSeq" id="WP_012700144.1">
    <property type="nucleotide sequence ID" value="NC_012560.1"/>
</dbReference>
<dbReference type="SMR" id="C1DRJ0"/>
<dbReference type="STRING" id="322710.Avin_15130"/>
<dbReference type="EnsemblBacteria" id="ACO77728">
    <property type="protein sequence ID" value="ACO77728"/>
    <property type="gene ID" value="Avin_15130"/>
</dbReference>
<dbReference type="GeneID" id="88184807"/>
<dbReference type="KEGG" id="avn:Avin_15130"/>
<dbReference type="eggNOG" id="COG0119">
    <property type="taxonomic scope" value="Bacteria"/>
</dbReference>
<dbReference type="HOGENOM" id="CLU_049173_0_0_6"/>
<dbReference type="OrthoDB" id="9803573at2"/>
<dbReference type="Proteomes" id="UP000002424">
    <property type="component" value="Chromosome"/>
</dbReference>
<dbReference type="GO" id="GO:0003852">
    <property type="term" value="F:2-isopropylmalate synthase activity"/>
    <property type="evidence" value="ECO:0007669"/>
    <property type="project" value="TreeGrafter"/>
</dbReference>
<dbReference type="GO" id="GO:0008701">
    <property type="term" value="F:4-hydroxy-2-oxovalerate aldolase activity"/>
    <property type="evidence" value="ECO:0007669"/>
    <property type="project" value="UniProtKB-UniRule"/>
</dbReference>
<dbReference type="GO" id="GO:0030145">
    <property type="term" value="F:manganese ion binding"/>
    <property type="evidence" value="ECO:0007669"/>
    <property type="project" value="UniProtKB-UniRule"/>
</dbReference>
<dbReference type="GO" id="GO:0009056">
    <property type="term" value="P:catabolic process"/>
    <property type="evidence" value="ECO:0007669"/>
    <property type="project" value="UniProtKB-KW"/>
</dbReference>
<dbReference type="GO" id="GO:0009098">
    <property type="term" value="P:L-leucine biosynthetic process"/>
    <property type="evidence" value="ECO:0007669"/>
    <property type="project" value="TreeGrafter"/>
</dbReference>
<dbReference type="CDD" id="cd07943">
    <property type="entry name" value="DRE_TIM_HOA"/>
    <property type="match status" value="1"/>
</dbReference>
<dbReference type="FunFam" id="1.10.8.60:FF:000042">
    <property type="entry name" value="4-hydroxy-2-oxovalerate aldolase"/>
    <property type="match status" value="1"/>
</dbReference>
<dbReference type="Gene3D" id="1.10.8.60">
    <property type="match status" value="1"/>
</dbReference>
<dbReference type="Gene3D" id="3.20.20.70">
    <property type="entry name" value="Aldolase class I"/>
    <property type="match status" value="1"/>
</dbReference>
<dbReference type="HAMAP" id="MF_01656">
    <property type="entry name" value="HOA"/>
    <property type="match status" value="1"/>
</dbReference>
<dbReference type="InterPro" id="IPR050073">
    <property type="entry name" value="2-IPM_HCS-like"/>
</dbReference>
<dbReference type="InterPro" id="IPR017629">
    <property type="entry name" value="4OH_2_O-val_aldolase"/>
</dbReference>
<dbReference type="InterPro" id="IPR013785">
    <property type="entry name" value="Aldolase_TIM"/>
</dbReference>
<dbReference type="InterPro" id="IPR012425">
    <property type="entry name" value="DmpG_comm"/>
</dbReference>
<dbReference type="InterPro" id="IPR035685">
    <property type="entry name" value="DRE_TIM_HOA"/>
</dbReference>
<dbReference type="InterPro" id="IPR000891">
    <property type="entry name" value="PYR_CT"/>
</dbReference>
<dbReference type="NCBIfam" id="TIGR03217">
    <property type="entry name" value="4OH_2_O_val_ald"/>
    <property type="match status" value="1"/>
</dbReference>
<dbReference type="NCBIfam" id="NF006049">
    <property type="entry name" value="PRK08195.1"/>
    <property type="match status" value="1"/>
</dbReference>
<dbReference type="PANTHER" id="PTHR10277:SF9">
    <property type="entry name" value="2-ISOPROPYLMALATE SYNTHASE 1, CHLOROPLASTIC-RELATED"/>
    <property type="match status" value="1"/>
</dbReference>
<dbReference type="PANTHER" id="PTHR10277">
    <property type="entry name" value="HOMOCITRATE SYNTHASE-RELATED"/>
    <property type="match status" value="1"/>
</dbReference>
<dbReference type="Pfam" id="PF07836">
    <property type="entry name" value="DmpG_comm"/>
    <property type="match status" value="1"/>
</dbReference>
<dbReference type="Pfam" id="PF00682">
    <property type="entry name" value="HMGL-like"/>
    <property type="match status" value="1"/>
</dbReference>
<dbReference type="SUPFAM" id="SSF51569">
    <property type="entry name" value="Aldolase"/>
    <property type="match status" value="1"/>
</dbReference>
<dbReference type="SUPFAM" id="SSF89000">
    <property type="entry name" value="post-HMGL domain-like"/>
    <property type="match status" value="1"/>
</dbReference>
<dbReference type="PROSITE" id="PS50991">
    <property type="entry name" value="PYR_CT"/>
    <property type="match status" value="1"/>
</dbReference>
<evidence type="ECO:0000255" key="1">
    <source>
        <dbReference type="HAMAP-Rule" id="MF_01656"/>
    </source>
</evidence>
<protein>
    <recommendedName>
        <fullName evidence="1">4-hydroxy-2-oxovalerate aldolase 2</fullName>
        <shortName evidence="1">HOA 2</shortName>
        <ecNumber evidence="1">4.1.3.39</ecNumber>
    </recommendedName>
    <alternativeName>
        <fullName evidence="1">4-hydroxy-2-keto-pentanoic acid aldolase 2</fullName>
    </alternativeName>
    <alternativeName>
        <fullName evidence="1">4-hydroxy-2-oxopentanoate aldolase 2</fullName>
    </alternativeName>
</protein>